<evidence type="ECO:0000250" key="1"/>
<evidence type="ECO:0000256" key="2">
    <source>
        <dbReference type="SAM" id="MobiDB-lite"/>
    </source>
</evidence>
<evidence type="ECO:0000305" key="3"/>
<accession>Q9FIA9</accession>
<accession>Q8L9J1</accession>
<protein>
    <recommendedName>
        <fullName>Elicitor peptide 4</fullName>
    </recommendedName>
</protein>
<sequence>MERGVSYYLWIPFKFIHQTFGSLLLKLLGLRSPSDHSFPEDGEEEVKVVEVSSRGLPGKKNVLKKSRESSGKPGGTNKKPF</sequence>
<reference key="1">
    <citation type="journal article" date="1998" name="DNA Res.">
        <title>Structural analysis of Arabidopsis thaliana chromosome 5. VIII. Sequence features of the regions of 1,081,958 bp covered by seventeen physically assigned P1 and TAC clones.</title>
        <authorList>
            <person name="Asamizu E."/>
            <person name="Sato S."/>
            <person name="Kaneko T."/>
            <person name="Nakamura Y."/>
            <person name="Kotani H."/>
            <person name="Miyajima N."/>
            <person name="Tabata S."/>
        </authorList>
    </citation>
    <scope>NUCLEOTIDE SEQUENCE [LARGE SCALE GENOMIC DNA]</scope>
    <source>
        <strain>cv. Columbia</strain>
    </source>
</reference>
<reference key="2">
    <citation type="journal article" date="2017" name="Plant J.">
        <title>Araport11: a complete reannotation of the Arabidopsis thaliana reference genome.</title>
        <authorList>
            <person name="Cheng C.Y."/>
            <person name="Krishnakumar V."/>
            <person name="Chan A.P."/>
            <person name="Thibaud-Nissen F."/>
            <person name="Schobel S."/>
            <person name="Town C.D."/>
        </authorList>
    </citation>
    <scope>GENOME REANNOTATION</scope>
    <source>
        <strain>cv. Columbia</strain>
    </source>
</reference>
<reference key="3">
    <citation type="journal article" date="2003" name="Science">
        <title>Empirical analysis of transcriptional activity in the Arabidopsis genome.</title>
        <authorList>
            <person name="Yamada K."/>
            <person name="Lim J."/>
            <person name="Dale J.M."/>
            <person name="Chen H."/>
            <person name="Shinn P."/>
            <person name="Palm C.J."/>
            <person name="Southwick A.M."/>
            <person name="Wu H.C."/>
            <person name="Kim C.J."/>
            <person name="Nguyen M."/>
            <person name="Pham P.K."/>
            <person name="Cheuk R.F."/>
            <person name="Karlin-Newmann G."/>
            <person name="Liu S.X."/>
            <person name="Lam B."/>
            <person name="Sakano H."/>
            <person name="Wu T."/>
            <person name="Yu G."/>
            <person name="Miranda M."/>
            <person name="Quach H.L."/>
            <person name="Tripp M."/>
            <person name="Chang C.H."/>
            <person name="Lee J.M."/>
            <person name="Toriumi M.J."/>
            <person name="Chan M.M."/>
            <person name="Tang C.C."/>
            <person name="Onodera C.S."/>
            <person name="Deng J.M."/>
            <person name="Akiyama K."/>
            <person name="Ansari Y."/>
            <person name="Arakawa T."/>
            <person name="Banh J."/>
            <person name="Banno F."/>
            <person name="Bowser L."/>
            <person name="Brooks S.Y."/>
            <person name="Carninci P."/>
            <person name="Chao Q."/>
            <person name="Choy N."/>
            <person name="Enju A."/>
            <person name="Goldsmith A.D."/>
            <person name="Gurjal M."/>
            <person name="Hansen N.F."/>
            <person name="Hayashizaki Y."/>
            <person name="Johnson-Hopson C."/>
            <person name="Hsuan V.W."/>
            <person name="Iida K."/>
            <person name="Karnes M."/>
            <person name="Khan S."/>
            <person name="Koesema E."/>
            <person name="Ishida J."/>
            <person name="Jiang P.X."/>
            <person name="Jones T."/>
            <person name="Kawai J."/>
            <person name="Kamiya A."/>
            <person name="Meyers C."/>
            <person name="Nakajima M."/>
            <person name="Narusaka M."/>
            <person name="Seki M."/>
            <person name="Sakurai T."/>
            <person name="Satou M."/>
            <person name="Tamse R."/>
            <person name="Vaysberg M."/>
            <person name="Wallender E.K."/>
            <person name="Wong C."/>
            <person name="Yamamura Y."/>
            <person name="Yuan S."/>
            <person name="Shinozaki K."/>
            <person name="Davis R.W."/>
            <person name="Theologis A."/>
            <person name="Ecker J.R."/>
        </authorList>
    </citation>
    <scope>NUCLEOTIDE SEQUENCE [LARGE SCALE MRNA]</scope>
    <source>
        <strain>cv. Columbia</strain>
    </source>
</reference>
<reference key="4">
    <citation type="submission" date="2002-03" db="EMBL/GenBank/DDBJ databases">
        <title>Full-length cDNA from Arabidopsis thaliana.</title>
        <authorList>
            <person name="Brover V.V."/>
            <person name="Troukhan M.E."/>
            <person name="Alexandrov N.A."/>
            <person name="Lu Y.-P."/>
            <person name="Flavell R.B."/>
            <person name="Feldmann K.A."/>
        </authorList>
    </citation>
    <scope>NUCLEOTIDE SEQUENCE [LARGE SCALE MRNA]</scope>
</reference>
<reference key="5">
    <citation type="journal article" date="2006" name="Proc. Natl. Acad. Sci. U.S.A.">
        <title>An endogenous peptide signal in Arabidopsis activates components of the innate immune response.</title>
        <authorList>
            <person name="Huffaker A."/>
            <person name="Pearce G."/>
            <person name="Ryan C.A."/>
        </authorList>
    </citation>
    <scope>GENE FAMILY</scope>
    <scope>NOMENCLATURE</scope>
</reference>
<organism>
    <name type="scientific">Arabidopsis thaliana</name>
    <name type="common">Mouse-ear cress</name>
    <dbReference type="NCBI Taxonomy" id="3702"/>
    <lineage>
        <taxon>Eukaryota</taxon>
        <taxon>Viridiplantae</taxon>
        <taxon>Streptophyta</taxon>
        <taxon>Embryophyta</taxon>
        <taxon>Tracheophyta</taxon>
        <taxon>Spermatophyta</taxon>
        <taxon>Magnoliopsida</taxon>
        <taxon>eudicotyledons</taxon>
        <taxon>Gunneridae</taxon>
        <taxon>Pentapetalae</taxon>
        <taxon>rosids</taxon>
        <taxon>malvids</taxon>
        <taxon>Brassicales</taxon>
        <taxon>Brassicaceae</taxon>
        <taxon>Camelineae</taxon>
        <taxon>Arabidopsis</taxon>
    </lineage>
</organism>
<keyword id="KW-0611">Plant defense</keyword>
<keyword id="KW-1185">Reference proteome</keyword>
<name>PEP4_ARATH</name>
<feature type="propeptide" id="PRO_0000249085" evidence="1">
    <location>
        <begin position="1"/>
        <end position="54"/>
    </location>
</feature>
<feature type="peptide" id="PRO_0000249086" description="Elicitor peptide 4">
    <location>
        <begin position="55"/>
        <end position="81"/>
    </location>
</feature>
<feature type="region of interest" description="Disordered" evidence="2">
    <location>
        <begin position="57"/>
        <end position="81"/>
    </location>
</feature>
<feature type="site" description="Required for ligand-receptor interaction" evidence="1">
    <location>
        <position position="71"/>
    </location>
</feature>
<feature type="sequence conflict" description="In Ref. 4; AAM65940." evidence="3" ref="4">
    <original>G</original>
    <variation>V</variation>
    <location>
        <position position="58"/>
    </location>
</feature>
<dbReference type="EMBL" id="AB016893">
    <property type="protein sequence ID" value="BAB09419.1"/>
    <property type="molecule type" value="Genomic_DNA"/>
</dbReference>
<dbReference type="EMBL" id="CP002688">
    <property type="protein sequence ID" value="AED91475.1"/>
    <property type="molecule type" value="Genomic_DNA"/>
</dbReference>
<dbReference type="EMBL" id="AY052255">
    <property type="protein sequence ID" value="AAK97725.1"/>
    <property type="molecule type" value="mRNA"/>
</dbReference>
<dbReference type="EMBL" id="AY060509">
    <property type="protein sequence ID" value="AAL31122.1"/>
    <property type="molecule type" value="mRNA"/>
</dbReference>
<dbReference type="EMBL" id="AY088403">
    <property type="protein sequence ID" value="AAM65940.1"/>
    <property type="molecule type" value="mRNA"/>
</dbReference>
<dbReference type="RefSeq" id="NP_568223.1">
    <property type="nucleotide sequence ID" value="NM_121035.4"/>
</dbReference>
<dbReference type="SMR" id="Q9FIA9"/>
<dbReference type="FunCoup" id="Q9FIA9">
    <property type="interactions" value="21"/>
</dbReference>
<dbReference type="STRING" id="3702.Q9FIA9"/>
<dbReference type="iPTMnet" id="Q9FIA9"/>
<dbReference type="PaxDb" id="3702-AT5G09980.1"/>
<dbReference type="ProteomicsDB" id="235091"/>
<dbReference type="EnsemblPlants" id="AT5G09980.1">
    <property type="protein sequence ID" value="AT5G09980.1"/>
    <property type="gene ID" value="AT5G09980"/>
</dbReference>
<dbReference type="GeneID" id="830859"/>
<dbReference type="Gramene" id="AT5G09980.1">
    <property type="protein sequence ID" value="AT5G09980.1"/>
    <property type="gene ID" value="AT5G09980"/>
</dbReference>
<dbReference type="KEGG" id="ath:AT5G09980"/>
<dbReference type="Araport" id="AT5G09980"/>
<dbReference type="TAIR" id="AT5G09980">
    <property type="gene designation" value="PROPEP4"/>
</dbReference>
<dbReference type="HOGENOM" id="CLU_2486520_0_0_1"/>
<dbReference type="InParanoid" id="Q9FIA9"/>
<dbReference type="OMA" id="SHHNIQE"/>
<dbReference type="OrthoDB" id="1110671at2759"/>
<dbReference type="PRO" id="PR:Q9FIA9"/>
<dbReference type="Proteomes" id="UP000006548">
    <property type="component" value="Chromosome 5"/>
</dbReference>
<dbReference type="ExpressionAtlas" id="Q9FIA9">
    <property type="expression patterns" value="baseline and differential"/>
</dbReference>
<dbReference type="GO" id="GO:0045087">
    <property type="term" value="P:innate immune response"/>
    <property type="evidence" value="ECO:0007669"/>
    <property type="project" value="InterPro"/>
</dbReference>
<dbReference type="GO" id="GO:0009753">
    <property type="term" value="P:response to jasmonic acid"/>
    <property type="evidence" value="ECO:0000270"/>
    <property type="project" value="TAIR"/>
</dbReference>
<dbReference type="InterPro" id="IPR035176">
    <property type="entry name" value="PEP"/>
</dbReference>
<dbReference type="Pfam" id="PF17232">
    <property type="entry name" value="Pep1_7"/>
    <property type="match status" value="1"/>
</dbReference>
<proteinExistence type="inferred from homology"/>
<gene>
    <name type="primary">PEP4</name>
    <name type="synonym">PROPEP4</name>
    <name type="ordered locus">At5g09980</name>
    <name type="ORF">MYH9.20</name>
</gene>
<comment type="function">
    <text evidence="1">Elicitor of plant defense.</text>
</comment>
<comment type="similarity">
    <text evidence="3">Belongs to the brassicaceae elicitor peptide family.</text>
</comment>